<accession>Q5LXT5</accession>
<protein>
    <recommendedName>
        <fullName evidence="1">Small ribosomal subunit protein uS13</fullName>
    </recommendedName>
    <alternativeName>
        <fullName evidence="3">30S ribosomal protein S13</fullName>
    </alternativeName>
</protein>
<dbReference type="EMBL" id="CP000024">
    <property type="protein sequence ID" value="AAV63423.1"/>
    <property type="molecule type" value="Genomic_DNA"/>
</dbReference>
<dbReference type="RefSeq" id="WP_002885820.1">
    <property type="nucleotide sequence ID" value="NC_006449.1"/>
</dbReference>
<dbReference type="SMR" id="Q5LXT5"/>
<dbReference type="GeneID" id="93793063"/>
<dbReference type="KEGG" id="stc:str1910"/>
<dbReference type="HOGENOM" id="CLU_103849_1_1_9"/>
<dbReference type="GO" id="GO:0005829">
    <property type="term" value="C:cytosol"/>
    <property type="evidence" value="ECO:0007669"/>
    <property type="project" value="TreeGrafter"/>
</dbReference>
<dbReference type="GO" id="GO:0015935">
    <property type="term" value="C:small ribosomal subunit"/>
    <property type="evidence" value="ECO:0007669"/>
    <property type="project" value="TreeGrafter"/>
</dbReference>
<dbReference type="GO" id="GO:0019843">
    <property type="term" value="F:rRNA binding"/>
    <property type="evidence" value="ECO:0007669"/>
    <property type="project" value="UniProtKB-UniRule"/>
</dbReference>
<dbReference type="GO" id="GO:0003735">
    <property type="term" value="F:structural constituent of ribosome"/>
    <property type="evidence" value="ECO:0007669"/>
    <property type="project" value="InterPro"/>
</dbReference>
<dbReference type="GO" id="GO:0000049">
    <property type="term" value="F:tRNA binding"/>
    <property type="evidence" value="ECO:0007669"/>
    <property type="project" value="UniProtKB-UniRule"/>
</dbReference>
<dbReference type="GO" id="GO:0006412">
    <property type="term" value="P:translation"/>
    <property type="evidence" value="ECO:0007669"/>
    <property type="project" value="UniProtKB-UniRule"/>
</dbReference>
<dbReference type="FunFam" id="1.10.8.50:FF:000001">
    <property type="entry name" value="30S ribosomal protein S13"/>
    <property type="match status" value="1"/>
</dbReference>
<dbReference type="FunFam" id="4.10.910.10:FF:000001">
    <property type="entry name" value="30S ribosomal protein S13"/>
    <property type="match status" value="1"/>
</dbReference>
<dbReference type="Gene3D" id="1.10.8.50">
    <property type="match status" value="1"/>
</dbReference>
<dbReference type="Gene3D" id="4.10.910.10">
    <property type="entry name" value="30s ribosomal protein s13, domain 2"/>
    <property type="match status" value="1"/>
</dbReference>
<dbReference type="HAMAP" id="MF_01315">
    <property type="entry name" value="Ribosomal_uS13"/>
    <property type="match status" value="1"/>
</dbReference>
<dbReference type="InterPro" id="IPR027437">
    <property type="entry name" value="Rbsml_uS13_C"/>
</dbReference>
<dbReference type="InterPro" id="IPR001892">
    <property type="entry name" value="Ribosomal_uS13"/>
</dbReference>
<dbReference type="InterPro" id="IPR010979">
    <property type="entry name" value="Ribosomal_uS13-like_H2TH"/>
</dbReference>
<dbReference type="InterPro" id="IPR019980">
    <property type="entry name" value="Ribosomal_uS13_bac-type"/>
</dbReference>
<dbReference type="InterPro" id="IPR018269">
    <property type="entry name" value="Ribosomal_uS13_CS"/>
</dbReference>
<dbReference type="NCBIfam" id="TIGR03631">
    <property type="entry name" value="uS13_bact"/>
    <property type="match status" value="1"/>
</dbReference>
<dbReference type="PANTHER" id="PTHR10871">
    <property type="entry name" value="30S RIBOSOMAL PROTEIN S13/40S RIBOSOMAL PROTEIN S18"/>
    <property type="match status" value="1"/>
</dbReference>
<dbReference type="PANTHER" id="PTHR10871:SF1">
    <property type="entry name" value="SMALL RIBOSOMAL SUBUNIT PROTEIN US13M"/>
    <property type="match status" value="1"/>
</dbReference>
<dbReference type="Pfam" id="PF00416">
    <property type="entry name" value="Ribosomal_S13"/>
    <property type="match status" value="1"/>
</dbReference>
<dbReference type="PIRSF" id="PIRSF002134">
    <property type="entry name" value="Ribosomal_S13"/>
    <property type="match status" value="1"/>
</dbReference>
<dbReference type="SUPFAM" id="SSF46946">
    <property type="entry name" value="S13-like H2TH domain"/>
    <property type="match status" value="1"/>
</dbReference>
<dbReference type="PROSITE" id="PS00646">
    <property type="entry name" value="RIBOSOMAL_S13_1"/>
    <property type="match status" value="1"/>
</dbReference>
<dbReference type="PROSITE" id="PS50159">
    <property type="entry name" value="RIBOSOMAL_S13_2"/>
    <property type="match status" value="1"/>
</dbReference>
<evidence type="ECO:0000255" key="1">
    <source>
        <dbReference type="HAMAP-Rule" id="MF_01315"/>
    </source>
</evidence>
<evidence type="ECO:0000256" key="2">
    <source>
        <dbReference type="SAM" id="MobiDB-lite"/>
    </source>
</evidence>
<evidence type="ECO:0000305" key="3"/>
<feature type="chain" id="PRO_0000230571" description="Small ribosomal subunit protein uS13">
    <location>
        <begin position="1"/>
        <end position="121"/>
    </location>
</feature>
<feature type="region of interest" description="Disordered" evidence="2">
    <location>
        <begin position="95"/>
        <end position="121"/>
    </location>
</feature>
<feature type="compositionally biased region" description="Basic residues" evidence="2">
    <location>
        <begin position="106"/>
        <end position="121"/>
    </location>
</feature>
<gene>
    <name evidence="1" type="primary">rpsM</name>
    <name type="ordered locus">str1910</name>
</gene>
<sequence>MARIAGVDIPNDKRVVISLTYVYGIGLATSKKILAAAGVSEDIRVKDLTNDQEDAIRREVDAIKVEGDLRREVNLNIKRLMEIGSYRGIRHRRGLPVRGQNTKNNARTRKGKAVAIAGKKK</sequence>
<keyword id="KW-0687">Ribonucleoprotein</keyword>
<keyword id="KW-0689">Ribosomal protein</keyword>
<keyword id="KW-0694">RNA-binding</keyword>
<keyword id="KW-0699">rRNA-binding</keyword>
<keyword id="KW-0820">tRNA-binding</keyword>
<comment type="function">
    <text evidence="1">Located at the top of the head of the 30S subunit, it contacts several helices of the 16S rRNA. In the 70S ribosome it contacts the 23S rRNA (bridge B1a) and protein L5 of the 50S subunit (bridge B1b), connecting the 2 subunits; these bridges are implicated in subunit movement. Contacts the tRNAs in the A and P-sites.</text>
</comment>
<comment type="subunit">
    <text evidence="1">Part of the 30S ribosomal subunit. Forms a loose heterodimer with protein S19. Forms two bridges to the 50S subunit in the 70S ribosome.</text>
</comment>
<comment type="similarity">
    <text evidence="1">Belongs to the universal ribosomal protein uS13 family.</text>
</comment>
<name>RS13_STRT1</name>
<organism>
    <name type="scientific">Streptococcus thermophilus (strain CNRZ 1066)</name>
    <dbReference type="NCBI Taxonomy" id="299768"/>
    <lineage>
        <taxon>Bacteria</taxon>
        <taxon>Bacillati</taxon>
        <taxon>Bacillota</taxon>
        <taxon>Bacilli</taxon>
        <taxon>Lactobacillales</taxon>
        <taxon>Streptococcaceae</taxon>
        <taxon>Streptococcus</taxon>
    </lineage>
</organism>
<reference key="1">
    <citation type="journal article" date="2004" name="Nat. Biotechnol.">
        <title>Complete sequence and comparative genome analysis of the dairy bacterium Streptococcus thermophilus.</title>
        <authorList>
            <person name="Bolotin A."/>
            <person name="Quinquis B."/>
            <person name="Renault P."/>
            <person name="Sorokin A."/>
            <person name="Ehrlich S.D."/>
            <person name="Kulakauskas S."/>
            <person name="Lapidus A."/>
            <person name="Goltsman E."/>
            <person name="Mazur M."/>
            <person name="Pusch G.D."/>
            <person name="Fonstein M."/>
            <person name="Overbeek R."/>
            <person name="Kyprides N."/>
            <person name="Purnelle B."/>
            <person name="Prozzi D."/>
            <person name="Ngui K."/>
            <person name="Masuy D."/>
            <person name="Hancy F."/>
            <person name="Burteau S."/>
            <person name="Boutry M."/>
            <person name="Delcour J."/>
            <person name="Goffeau A."/>
            <person name="Hols P."/>
        </authorList>
    </citation>
    <scope>NUCLEOTIDE SEQUENCE [LARGE SCALE GENOMIC DNA]</scope>
    <source>
        <strain>CNRZ 1066</strain>
    </source>
</reference>
<proteinExistence type="inferred from homology"/>